<keyword id="KW-1185">Reference proteome</keyword>
<keyword id="KW-0687">Ribonucleoprotein</keyword>
<keyword id="KW-0689">Ribosomal protein</keyword>
<keyword id="KW-0694">RNA-binding</keyword>
<keyword id="KW-0699">rRNA-binding</keyword>
<protein>
    <recommendedName>
        <fullName evidence="1">Large ribosomal subunit protein uL15</fullName>
    </recommendedName>
    <alternativeName>
        <fullName evidence="3">50S ribosomal protein L15</fullName>
    </alternativeName>
</protein>
<organism>
    <name type="scientific">Shewanella pealeana (strain ATCC 700345 / ANG-SQ1)</name>
    <dbReference type="NCBI Taxonomy" id="398579"/>
    <lineage>
        <taxon>Bacteria</taxon>
        <taxon>Pseudomonadati</taxon>
        <taxon>Pseudomonadota</taxon>
        <taxon>Gammaproteobacteria</taxon>
        <taxon>Alteromonadales</taxon>
        <taxon>Shewanellaceae</taxon>
        <taxon>Shewanella</taxon>
    </lineage>
</organism>
<gene>
    <name evidence="1" type="primary">rplO</name>
    <name type="ordered locus">Spea_0203</name>
</gene>
<accession>A8GYZ5</accession>
<dbReference type="EMBL" id="CP000851">
    <property type="protein sequence ID" value="ABV85532.1"/>
    <property type="molecule type" value="Genomic_DNA"/>
</dbReference>
<dbReference type="RefSeq" id="WP_012153473.1">
    <property type="nucleotide sequence ID" value="NC_009901.1"/>
</dbReference>
<dbReference type="SMR" id="A8GYZ5"/>
<dbReference type="STRING" id="398579.Spea_0203"/>
<dbReference type="KEGG" id="spl:Spea_0203"/>
<dbReference type="eggNOG" id="COG0200">
    <property type="taxonomic scope" value="Bacteria"/>
</dbReference>
<dbReference type="HOGENOM" id="CLU_055188_4_2_6"/>
<dbReference type="OrthoDB" id="9810293at2"/>
<dbReference type="Proteomes" id="UP000002608">
    <property type="component" value="Chromosome"/>
</dbReference>
<dbReference type="GO" id="GO:0022625">
    <property type="term" value="C:cytosolic large ribosomal subunit"/>
    <property type="evidence" value="ECO:0007669"/>
    <property type="project" value="TreeGrafter"/>
</dbReference>
<dbReference type="GO" id="GO:0019843">
    <property type="term" value="F:rRNA binding"/>
    <property type="evidence" value="ECO:0007669"/>
    <property type="project" value="UniProtKB-UniRule"/>
</dbReference>
<dbReference type="GO" id="GO:0003735">
    <property type="term" value="F:structural constituent of ribosome"/>
    <property type="evidence" value="ECO:0007669"/>
    <property type="project" value="InterPro"/>
</dbReference>
<dbReference type="GO" id="GO:0006412">
    <property type="term" value="P:translation"/>
    <property type="evidence" value="ECO:0007669"/>
    <property type="project" value="UniProtKB-UniRule"/>
</dbReference>
<dbReference type="FunFam" id="3.100.10.10:FF:000003">
    <property type="entry name" value="50S ribosomal protein L15"/>
    <property type="match status" value="1"/>
</dbReference>
<dbReference type="Gene3D" id="3.100.10.10">
    <property type="match status" value="1"/>
</dbReference>
<dbReference type="HAMAP" id="MF_01341">
    <property type="entry name" value="Ribosomal_uL15"/>
    <property type="match status" value="1"/>
</dbReference>
<dbReference type="InterPro" id="IPR030878">
    <property type="entry name" value="Ribosomal_uL15"/>
</dbReference>
<dbReference type="InterPro" id="IPR021131">
    <property type="entry name" value="Ribosomal_uL15/eL18"/>
</dbReference>
<dbReference type="InterPro" id="IPR036227">
    <property type="entry name" value="Ribosomal_uL15/eL18_sf"/>
</dbReference>
<dbReference type="InterPro" id="IPR005749">
    <property type="entry name" value="Ribosomal_uL15_bac-type"/>
</dbReference>
<dbReference type="InterPro" id="IPR001196">
    <property type="entry name" value="Ribosomal_uL15_CS"/>
</dbReference>
<dbReference type="NCBIfam" id="TIGR01071">
    <property type="entry name" value="rplO_bact"/>
    <property type="match status" value="1"/>
</dbReference>
<dbReference type="PANTHER" id="PTHR12934">
    <property type="entry name" value="50S RIBOSOMAL PROTEIN L15"/>
    <property type="match status" value="1"/>
</dbReference>
<dbReference type="PANTHER" id="PTHR12934:SF11">
    <property type="entry name" value="LARGE RIBOSOMAL SUBUNIT PROTEIN UL15M"/>
    <property type="match status" value="1"/>
</dbReference>
<dbReference type="Pfam" id="PF00828">
    <property type="entry name" value="Ribosomal_L27A"/>
    <property type="match status" value="1"/>
</dbReference>
<dbReference type="SUPFAM" id="SSF52080">
    <property type="entry name" value="Ribosomal proteins L15p and L18e"/>
    <property type="match status" value="1"/>
</dbReference>
<dbReference type="PROSITE" id="PS00475">
    <property type="entry name" value="RIBOSOMAL_L15"/>
    <property type="match status" value="1"/>
</dbReference>
<feature type="chain" id="PRO_1000086732" description="Large ribosomal subunit protein uL15">
    <location>
        <begin position="1"/>
        <end position="144"/>
    </location>
</feature>
<feature type="region of interest" description="Disordered" evidence="2">
    <location>
        <begin position="1"/>
        <end position="49"/>
    </location>
</feature>
<feature type="compositionally biased region" description="Gly residues" evidence="2">
    <location>
        <begin position="21"/>
        <end position="31"/>
    </location>
</feature>
<sequence length="144" mass="14950">MRLNTLSPAAGAKSAAKRVGRGIGSGTGKTCGRGHKGQKSRSGGGVRVGFEGGQMPLKIRLPKFGFTSRKALVSAEIRISELAKVNGDVIDLNALKDANLVTRNIQFAKIVLSGTIERPVTVKGLKVTQGARAAIEAAGGKIEE</sequence>
<reference key="1">
    <citation type="submission" date="2007-10" db="EMBL/GenBank/DDBJ databases">
        <title>Complete sequence of Shewanella pealeana ATCC 700345.</title>
        <authorList>
            <consortium name="US DOE Joint Genome Institute"/>
            <person name="Copeland A."/>
            <person name="Lucas S."/>
            <person name="Lapidus A."/>
            <person name="Barry K."/>
            <person name="Glavina del Rio T."/>
            <person name="Dalin E."/>
            <person name="Tice H."/>
            <person name="Pitluck S."/>
            <person name="Chertkov O."/>
            <person name="Brettin T."/>
            <person name="Bruce D."/>
            <person name="Detter J.C."/>
            <person name="Han C."/>
            <person name="Schmutz J."/>
            <person name="Larimer F."/>
            <person name="Land M."/>
            <person name="Hauser L."/>
            <person name="Kyrpides N."/>
            <person name="Kim E."/>
            <person name="Zhao J.-S.Z."/>
            <person name="Manno D."/>
            <person name="Hawari J."/>
            <person name="Richardson P."/>
        </authorList>
    </citation>
    <scope>NUCLEOTIDE SEQUENCE [LARGE SCALE GENOMIC DNA]</scope>
    <source>
        <strain>ATCC 700345 / ANG-SQ1</strain>
    </source>
</reference>
<comment type="function">
    <text evidence="1">Binds to the 23S rRNA.</text>
</comment>
<comment type="subunit">
    <text evidence="1">Part of the 50S ribosomal subunit.</text>
</comment>
<comment type="similarity">
    <text evidence="1">Belongs to the universal ribosomal protein uL15 family.</text>
</comment>
<name>RL15_SHEPA</name>
<evidence type="ECO:0000255" key="1">
    <source>
        <dbReference type="HAMAP-Rule" id="MF_01341"/>
    </source>
</evidence>
<evidence type="ECO:0000256" key="2">
    <source>
        <dbReference type="SAM" id="MobiDB-lite"/>
    </source>
</evidence>
<evidence type="ECO:0000305" key="3"/>
<proteinExistence type="inferred from homology"/>